<accession>P0C1P1</accession>
<feature type="chain" id="PRO_0000246313" description="Phosphatidylinositol N-acetylglucosaminyltransferase subunit Y">
    <location>
        <begin position="1"/>
        <end position="71"/>
    </location>
</feature>
<feature type="topological domain" description="Cytoplasmic" evidence="2">
    <location>
        <position position="1"/>
    </location>
</feature>
<feature type="transmembrane region" description="Helical" evidence="2">
    <location>
        <begin position="2"/>
        <end position="21"/>
    </location>
</feature>
<feature type="topological domain" description="Lumenal" evidence="2">
    <location>
        <begin position="22"/>
        <end position="44"/>
    </location>
</feature>
<feature type="transmembrane region" description="Helical" evidence="2">
    <location>
        <begin position="45"/>
        <end position="65"/>
    </location>
</feature>
<feature type="topological domain" description="Cytoplasmic" evidence="2">
    <location>
        <begin position="66"/>
        <end position="71"/>
    </location>
</feature>
<comment type="function">
    <text evidence="1">Part of the glycosylphosphatidylinositol-N-acetylglucosaminyltransferase (GPI-GnT) complex that catalyzes the transfer of N-acetylglucosamine from UDP-N-acetylglucosamine to phosphatidylinositol and participates in the first step of GPI biosynthesis. May act by regulating the catalytic subunit PIGA.</text>
</comment>
<comment type="pathway">
    <text evidence="1">Glycolipid biosynthesis; glycosylphosphatidylinositol-anchor biosynthesis.</text>
</comment>
<comment type="subunit">
    <text evidence="1">Component of the glycosylphosphatidylinositol-N-acetylglucosaminyltransferase (GPI-GnT) complex composed at least by PIGA, PIGC, PIGH, PIGP, PIGQ, PIGY and DPM2.</text>
</comment>
<comment type="subcellular location">
    <subcellularLocation>
        <location evidence="1">Endoplasmic reticulum membrane</location>
        <topology evidence="1">Multi-pass membrane protein</topology>
    </subcellularLocation>
</comment>
<comment type="miscellaneous">
    <text>PREY is derived from the same bicistronic transcript that encodes these 2 different proteins.</text>
</comment>
<dbReference type="EMBL" id="BC087772">
    <property type="status" value="NOT_ANNOTATED_CDS"/>
    <property type="molecule type" value="mRNA"/>
</dbReference>
<dbReference type="RefSeq" id="NP_001258944.1">
    <property type="nucleotide sequence ID" value="NM_001272015.2"/>
</dbReference>
<dbReference type="RefSeq" id="NP_001258945.1">
    <property type="nucleotide sequence ID" value="NM_001272016.2"/>
</dbReference>
<dbReference type="FunCoup" id="P0C1P1">
    <property type="interactions" value="100"/>
</dbReference>
<dbReference type="STRING" id="8364.ENSXETP00000004889"/>
<dbReference type="DNASU" id="496649"/>
<dbReference type="GeneID" id="496649"/>
<dbReference type="KEGG" id="xtr:496649"/>
<dbReference type="AGR" id="Xenbase:XB-GENE-5783232"/>
<dbReference type="CTD" id="84992"/>
<dbReference type="Xenbase" id="XB-GENE-5783232">
    <property type="gene designation" value="pigy"/>
</dbReference>
<dbReference type="InParanoid" id="P0C1P1"/>
<dbReference type="OMA" id="TNSLCFY"/>
<dbReference type="Reactome" id="R-XTR-162710">
    <property type="pathway name" value="Synthesis of glycosylphosphatidylinositol (GPI)"/>
</dbReference>
<dbReference type="UniPathway" id="UPA00196"/>
<dbReference type="Proteomes" id="UP000008143">
    <property type="component" value="Chromosome 1"/>
</dbReference>
<dbReference type="GO" id="GO:0005789">
    <property type="term" value="C:endoplasmic reticulum membrane"/>
    <property type="evidence" value="ECO:0007669"/>
    <property type="project" value="UniProtKB-SubCell"/>
</dbReference>
<dbReference type="GO" id="GO:0006506">
    <property type="term" value="P:GPI anchor biosynthetic process"/>
    <property type="evidence" value="ECO:0007669"/>
    <property type="project" value="UniProtKB-UniPathway"/>
</dbReference>
<dbReference type="InterPro" id="IPR029164">
    <property type="entry name" value="PIG-Y"/>
</dbReference>
<dbReference type="PANTHER" id="PTHR39235">
    <property type="entry name" value="PHOSPHATIDYLINOSITOL N-ACETYLGLUCOSAMINYLTRANSFERASE SUBUNIT Y"/>
    <property type="match status" value="1"/>
</dbReference>
<dbReference type="PANTHER" id="PTHR39235:SF1">
    <property type="entry name" value="PHOSPHATIDYLINOSITOL N-ACETYLGLUCOSAMINYLTRANSFERASE SUBUNIT Y"/>
    <property type="match status" value="1"/>
</dbReference>
<dbReference type="Pfam" id="PF15159">
    <property type="entry name" value="PIG-Y"/>
    <property type="match status" value="1"/>
</dbReference>
<name>PIGY_XENTR</name>
<sequence>MFFSLPVLTVLIPLVSLTGLLYSASVEEDFPNGCTSTASLCFYSLLLPITLPVYVFFHLWTWMGLKLFRHN</sequence>
<organism>
    <name type="scientific">Xenopus tropicalis</name>
    <name type="common">Western clawed frog</name>
    <name type="synonym">Silurana tropicalis</name>
    <dbReference type="NCBI Taxonomy" id="8364"/>
    <lineage>
        <taxon>Eukaryota</taxon>
        <taxon>Metazoa</taxon>
        <taxon>Chordata</taxon>
        <taxon>Craniata</taxon>
        <taxon>Vertebrata</taxon>
        <taxon>Euteleostomi</taxon>
        <taxon>Amphibia</taxon>
        <taxon>Batrachia</taxon>
        <taxon>Anura</taxon>
        <taxon>Pipoidea</taxon>
        <taxon>Pipidae</taxon>
        <taxon>Xenopodinae</taxon>
        <taxon>Xenopus</taxon>
        <taxon>Silurana</taxon>
    </lineage>
</organism>
<keyword id="KW-0256">Endoplasmic reticulum</keyword>
<keyword id="KW-0337">GPI-anchor biosynthesis</keyword>
<keyword id="KW-0472">Membrane</keyword>
<keyword id="KW-1185">Reference proteome</keyword>
<keyword id="KW-0812">Transmembrane</keyword>
<keyword id="KW-1133">Transmembrane helix</keyword>
<protein>
    <recommendedName>
        <fullName evidence="1">Phosphatidylinositol N-acetylglucosaminyltransferase subunit Y</fullName>
    </recommendedName>
    <alternativeName>
        <fullName>Phosphatidylinositol-glycan biosynthesis class Y protein</fullName>
        <shortName>PIG-Y</shortName>
    </alternativeName>
</protein>
<gene>
    <name evidence="1" type="primary">pigy</name>
</gene>
<proteinExistence type="inferred from homology"/>
<reference key="1">
    <citation type="submission" date="2004-12" db="EMBL/GenBank/DDBJ databases">
        <authorList>
            <consortium name="NIH - Xenopus Gene Collection (XGC) project"/>
        </authorList>
    </citation>
    <scope>NUCLEOTIDE SEQUENCE [LARGE SCALE MRNA]</scope>
</reference>
<evidence type="ECO:0000250" key="1">
    <source>
        <dbReference type="UniProtKB" id="Q3MUY2"/>
    </source>
</evidence>
<evidence type="ECO:0000255" key="2"/>